<proteinExistence type="inferred from homology"/>
<reference key="1">
    <citation type="journal article" date="2007" name="Proc. Natl. Acad. Sci. U.S.A.">
        <title>Deep-sea vent epsilon-proteobacterial genomes provide insights into emergence of pathogens.</title>
        <authorList>
            <person name="Nakagawa S."/>
            <person name="Takaki Y."/>
            <person name="Shimamura S."/>
            <person name="Reysenbach A.-L."/>
            <person name="Takai K."/>
            <person name="Horikoshi K."/>
        </authorList>
    </citation>
    <scope>NUCLEOTIDE SEQUENCE [LARGE SCALE GENOMIC DNA]</scope>
    <source>
        <strain>NBC37-1</strain>
    </source>
</reference>
<feature type="chain" id="PRO_0000315186" description="UDP-N-acetylglucosamine--N-acetylmuramyl-(pentapeptide) pyrophosphoryl-undecaprenol N-acetylglucosamine transferase">
    <location>
        <begin position="1"/>
        <end position="338"/>
    </location>
</feature>
<feature type="binding site" evidence="1">
    <location>
        <begin position="10"/>
        <end position="12"/>
    </location>
    <ligand>
        <name>UDP-N-acetyl-alpha-D-glucosamine</name>
        <dbReference type="ChEBI" id="CHEBI:57705"/>
    </ligand>
</feature>
<feature type="binding site" evidence="1">
    <location>
        <position position="122"/>
    </location>
    <ligand>
        <name>UDP-N-acetyl-alpha-D-glucosamine</name>
        <dbReference type="ChEBI" id="CHEBI:57705"/>
    </ligand>
</feature>
<feature type="binding site" evidence="1">
    <location>
        <position position="177"/>
    </location>
    <ligand>
        <name>UDP-N-acetyl-alpha-D-glucosamine</name>
        <dbReference type="ChEBI" id="CHEBI:57705"/>
    </ligand>
</feature>
<feature type="binding site" evidence="1">
    <location>
        <position position="275"/>
    </location>
    <ligand>
        <name>UDP-N-acetyl-alpha-D-glucosamine</name>
        <dbReference type="ChEBI" id="CHEBI:57705"/>
    </ligand>
</feature>
<accession>A6Q722</accession>
<name>MURG_SULNB</name>
<comment type="function">
    <text evidence="1">Cell wall formation. Catalyzes the transfer of a GlcNAc subunit on undecaprenyl-pyrophosphoryl-MurNAc-pentapeptide (lipid intermediate I) to form undecaprenyl-pyrophosphoryl-MurNAc-(pentapeptide)GlcNAc (lipid intermediate II).</text>
</comment>
<comment type="catalytic activity">
    <reaction evidence="1">
        <text>di-trans,octa-cis-undecaprenyl diphospho-N-acetyl-alpha-D-muramoyl-L-alanyl-D-glutamyl-meso-2,6-diaminopimeloyl-D-alanyl-D-alanine + UDP-N-acetyl-alpha-D-glucosamine = di-trans,octa-cis-undecaprenyl diphospho-[N-acetyl-alpha-D-glucosaminyl-(1-&gt;4)]-N-acetyl-alpha-D-muramoyl-L-alanyl-D-glutamyl-meso-2,6-diaminopimeloyl-D-alanyl-D-alanine + UDP + H(+)</text>
        <dbReference type="Rhea" id="RHEA:31227"/>
        <dbReference type="ChEBI" id="CHEBI:15378"/>
        <dbReference type="ChEBI" id="CHEBI:57705"/>
        <dbReference type="ChEBI" id="CHEBI:58223"/>
        <dbReference type="ChEBI" id="CHEBI:61387"/>
        <dbReference type="ChEBI" id="CHEBI:61388"/>
        <dbReference type="EC" id="2.4.1.227"/>
    </reaction>
</comment>
<comment type="pathway">
    <text evidence="1">Cell wall biogenesis; peptidoglycan biosynthesis.</text>
</comment>
<comment type="subcellular location">
    <subcellularLocation>
        <location evidence="1">Cell inner membrane</location>
        <topology evidence="1">Peripheral membrane protein</topology>
        <orientation evidence="1">Cytoplasmic side</orientation>
    </subcellularLocation>
</comment>
<comment type="similarity">
    <text evidence="1">Belongs to the glycosyltransferase 28 family. MurG subfamily.</text>
</comment>
<evidence type="ECO:0000255" key="1">
    <source>
        <dbReference type="HAMAP-Rule" id="MF_00033"/>
    </source>
</evidence>
<dbReference type="EC" id="2.4.1.227" evidence="1"/>
<dbReference type="EMBL" id="AP009179">
    <property type="protein sequence ID" value="BAF71281.1"/>
    <property type="molecule type" value="Genomic_DNA"/>
</dbReference>
<dbReference type="RefSeq" id="WP_011980014.1">
    <property type="nucleotide sequence ID" value="NC_009663.1"/>
</dbReference>
<dbReference type="SMR" id="A6Q722"/>
<dbReference type="STRING" id="387093.SUN_0321"/>
<dbReference type="CAZy" id="GT28">
    <property type="family name" value="Glycosyltransferase Family 28"/>
</dbReference>
<dbReference type="KEGG" id="sun:SUN_0321"/>
<dbReference type="eggNOG" id="COG0707">
    <property type="taxonomic scope" value="Bacteria"/>
</dbReference>
<dbReference type="HOGENOM" id="CLU_037404_2_1_7"/>
<dbReference type="OrthoDB" id="9808936at2"/>
<dbReference type="UniPathway" id="UPA00219"/>
<dbReference type="Proteomes" id="UP000006378">
    <property type="component" value="Chromosome"/>
</dbReference>
<dbReference type="GO" id="GO:0005886">
    <property type="term" value="C:plasma membrane"/>
    <property type="evidence" value="ECO:0007669"/>
    <property type="project" value="UniProtKB-SubCell"/>
</dbReference>
<dbReference type="GO" id="GO:0051991">
    <property type="term" value="F:UDP-N-acetyl-D-glucosamine:N-acetylmuramoyl-L-alanyl-D-glutamyl-meso-2,6-diaminopimelyl-D-alanyl-D-alanine-diphosphoundecaprenol 4-beta-N-acetylglucosaminlytransferase activity"/>
    <property type="evidence" value="ECO:0007669"/>
    <property type="project" value="RHEA"/>
</dbReference>
<dbReference type="GO" id="GO:0050511">
    <property type="term" value="F:undecaprenyldiphospho-muramoylpentapeptide beta-N-acetylglucosaminyltransferase activity"/>
    <property type="evidence" value="ECO:0007669"/>
    <property type="project" value="UniProtKB-UniRule"/>
</dbReference>
<dbReference type="GO" id="GO:0005975">
    <property type="term" value="P:carbohydrate metabolic process"/>
    <property type="evidence" value="ECO:0007669"/>
    <property type="project" value="InterPro"/>
</dbReference>
<dbReference type="GO" id="GO:0051301">
    <property type="term" value="P:cell division"/>
    <property type="evidence" value="ECO:0007669"/>
    <property type="project" value="UniProtKB-KW"/>
</dbReference>
<dbReference type="GO" id="GO:0071555">
    <property type="term" value="P:cell wall organization"/>
    <property type="evidence" value="ECO:0007669"/>
    <property type="project" value="UniProtKB-KW"/>
</dbReference>
<dbReference type="GO" id="GO:0030259">
    <property type="term" value="P:lipid glycosylation"/>
    <property type="evidence" value="ECO:0007669"/>
    <property type="project" value="UniProtKB-UniRule"/>
</dbReference>
<dbReference type="GO" id="GO:0009252">
    <property type="term" value="P:peptidoglycan biosynthetic process"/>
    <property type="evidence" value="ECO:0007669"/>
    <property type="project" value="UniProtKB-UniRule"/>
</dbReference>
<dbReference type="GO" id="GO:0008360">
    <property type="term" value="P:regulation of cell shape"/>
    <property type="evidence" value="ECO:0007669"/>
    <property type="project" value="UniProtKB-KW"/>
</dbReference>
<dbReference type="CDD" id="cd03785">
    <property type="entry name" value="GT28_MurG"/>
    <property type="match status" value="1"/>
</dbReference>
<dbReference type="Gene3D" id="3.40.50.2000">
    <property type="entry name" value="Glycogen Phosphorylase B"/>
    <property type="match status" value="2"/>
</dbReference>
<dbReference type="HAMAP" id="MF_00033">
    <property type="entry name" value="MurG"/>
    <property type="match status" value="1"/>
</dbReference>
<dbReference type="InterPro" id="IPR006009">
    <property type="entry name" value="GlcNAc_MurG"/>
</dbReference>
<dbReference type="InterPro" id="IPR007235">
    <property type="entry name" value="Glyco_trans_28_C"/>
</dbReference>
<dbReference type="InterPro" id="IPR004276">
    <property type="entry name" value="GlycoTrans_28_N"/>
</dbReference>
<dbReference type="NCBIfam" id="TIGR01133">
    <property type="entry name" value="murG"/>
    <property type="match status" value="1"/>
</dbReference>
<dbReference type="PANTHER" id="PTHR21015:SF22">
    <property type="entry name" value="GLYCOSYLTRANSFERASE"/>
    <property type="match status" value="1"/>
</dbReference>
<dbReference type="PANTHER" id="PTHR21015">
    <property type="entry name" value="UDP-N-ACETYLGLUCOSAMINE--N-ACETYLMURAMYL-(PENTAPEPTIDE) PYROPHOSPHORYL-UNDECAPRENOL N-ACETYLGLUCOSAMINE TRANSFERASE 1"/>
    <property type="match status" value="1"/>
</dbReference>
<dbReference type="Pfam" id="PF04101">
    <property type="entry name" value="Glyco_tran_28_C"/>
    <property type="match status" value="1"/>
</dbReference>
<dbReference type="Pfam" id="PF03033">
    <property type="entry name" value="Glyco_transf_28"/>
    <property type="match status" value="1"/>
</dbReference>
<dbReference type="SUPFAM" id="SSF53756">
    <property type="entry name" value="UDP-Glycosyltransferase/glycogen phosphorylase"/>
    <property type="match status" value="1"/>
</dbReference>
<protein>
    <recommendedName>
        <fullName evidence="1">UDP-N-acetylglucosamine--N-acetylmuramyl-(pentapeptide) pyrophosphoryl-undecaprenol N-acetylglucosamine transferase</fullName>
        <ecNumber evidence="1">2.4.1.227</ecNumber>
    </recommendedName>
    <alternativeName>
        <fullName evidence="1">Undecaprenyl-PP-MurNAc-pentapeptide-UDPGlcNAc GlcNAc transferase</fullName>
    </alternativeName>
</protein>
<keyword id="KW-0131">Cell cycle</keyword>
<keyword id="KW-0132">Cell division</keyword>
<keyword id="KW-0997">Cell inner membrane</keyword>
<keyword id="KW-1003">Cell membrane</keyword>
<keyword id="KW-0133">Cell shape</keyword>
<keyword id="KW-0961">Cell wall biogenesis/degradation</keyword>
<keyword id="KW-0328">Glycosyltransferase</keyword>
<keyword id="KW-0472">Membrane</keyword>
<keyword id="KW-0573">Peptidoglycan synthesis</keyword>
<keyword id="KW-0808">Transferase</keyword>
<gene>
    <name evidence="1" type="primary">murG</name>
    <name type="ordered locus">SUN_0321</name>
</gene>
<organism>
    <name type="scientific">Sulfurovum sp. (strain NBC37-1)</name>
    <dbReference type="NCBI Taxonomy" id="387093"/>
    <lineage>
        <taxon>Bacteria</taxon>
        <taxon>Pseudomonadati</taxon>
        <taxon>Campylobacterota</taxon>
        <taxon>Epsilonproteobacteria</taxon>
        <taxon>Campylobacterales</taxon>
        <taxon>Sulfurovaceae</taxon>
        <taxon>Sulfurovum</taxon>
    </lineage>
</organism>
<sequence>MSIIMTGGGTGGHLAIIKAVKEQLKGEELIYIGSTTGQDRQWFENDEDFTETYFFDTRGVVNQRGFGKLKSLWMMLQAMMKARKLLKKYDAKVVFSVGGFSSAATAFAAKSASVPLVIHEQNAALGSLNKLLRPYAAAFISSYLEESPIKAYPIKEVFFDNVRVRKNVETIIFLGGSQGAKAINKLALEIAPKLKERGIRIIHQAGEKNIDEVRKDYEDIGIEAEVFGFTTKLADYMKEADLAIARAGASTLWELSATALPTLFIPYPYAVSDHQYYNAQFLVEKDLAWIMREGEIDTQKVLALLGEDLETKSRGLMEIVEKDGSKQIADLLKNYAKS</sequence>